<organism>
    <name type="scientific">Mus musculus</name>
    <name type="common">Mouse</name>
    <dbReference type="NCBI Taxonomy" id="10090"/>
    <lineage>
        <taxon>Eukaryota</taxon>
        <taxon>Metazoa</taxon>
        <taxon>Chordata</taxon>
        <taxon>Craniata</taxon>
        <taxon>Vertebrata</taxon>
        <taxon>Euteleostomi</taxon>
        <taxon>Mammalia</taxon>
        <taxon>Eutheria</taxon>
        <taxon>Euarchontoglires</taxon>
        <taxon>Glires</taxon>
        <taxon>Rodentia</taxon>
        <taxon>Myomorpha</taxon>
        <taxon>Muroidea</taxon>
        <taxon>Muridae</taxon>
        <taxon>Murinae</taxon>
        <taxon>Mus</taxon>
        <taxon>Mus</taxon>
    </lineage>
</organism>
<sequence>MENSQLCKLFIGGLNVQTSESGLRGHFEAFGTLTDCVVVVNPQTKRSRCFGFVTYSNVEEADAAMAASPHAVDGNTVELKRAVSREDSARPGAHAKVKKLFVGGLKGDVAEGDLIEHFSQFGAVEKAEIIADKQSGKKRGFGFVYFQSHDAADKAAVVKFHPIQGHRVEVKKAVPKEDIHAGGGGARAARGGRGGGRGRGGGGGGGGRDQNGLAKGGGGGGGGYNSYGGYGGYGAYGGGGGGGGSYGGSDYGNGFGGFGSYSQHQSSYGPMKSGGGGGGGGSWGGRSNSGPYRGGYGGGYGGGSF</sequence>
<gene>
    <name type="primary">Hnrnpa0</name>
    <name type="synonym">Hnrpa0</name>
</gene>
<dbReference type="EMBL" id="AK019388">
    <property type="protein sequence ID" value="BAB31694.1"/>
    <property type="molecule type" value="mRNA"/>
</dbReference>
<dbReference type="EMBL" id="AC165251">
    <property type="status" value="NOT_ANNOTATED_CDS"/>
    <property type="molecule type" value="Genomic_DNA"/>
</dbReference>
<dbReference type="CCDS" id="CCDS49280.1"/>
<dbReference type="RefSeq" id="NP_084148.1">
    <property type="nucleotide sequence ID" value="NM_029872.1"/>
</dbReference>
<dbReference type="SMR" id="Q9CX86"/>
<dbReference type="BioGRID" id="218538">
    <property type="interactions" value="30"/>
</dbReference>
<dbReference type="FunCoup" id="Q9CX86">
    <property type="interactions" value="2339"/>
</dbReference>
<dbReference type="IntAct" id="Q9CX86">
    <property type="interactions" value="3"/>
</dbReference>
<dbReference type="MINT" id="Q9CX86"/>
<dbReference type="STRING" id="10090.ENSMUSP00000007980"/>
<dbReference type="GlyGen" id="Q9CX86">
    <property type="glycosylation" value="1 site, 1 O-linked glycan (1 site)"/>
</dbReference>
<dbReference type="iPTMnet" id="Q9CX86"/>
<dbReference type="PhosphoSitePlus" id="Q9CX86"/>
<dbReference type="SwissPalm" id="Q9CX86"/>
<dbReference type="jPOST" id="Q9CX86"/>
<dbReference type="PaxDb" id="10090-ENSMUSP00000007980"/>
<dbReference type="PeptideAtlas" id="Q9CX86"/>
<dbReference type="ProteomicsDB" id="300431"/>
<dbReference type="Pumba" id="Q9CX86"/>
<dbReference type="Antibodypedia" id="14786">
    <property type="antibodies" value="176 antibodies from 30 providers"/>
</dbReference>
<dbReference type="Ensembl" id="ENSMUST00000007980.7">
    <property type="protein sequence ID" value="ENSMUSP00000007980.7"/>
    <property type="gene ID" value="ENSMUSG00000007836.7"/>
</dbReference>
<dbReference type="GeneID" id="77134"/>
<dbReference type="KEGG" id="mmu:77134"/>
<dbReference type="UCSC" id="uc007qtf.2">
    <property type="organism name" value="mouse"/>
</dbReference>
<dbReference type="AGR" id="MGI:1924384"/>
<dbReference type="CTD" id="10949"/>
<dbReference type="MGI" id="MGI:1924384">
    <property type="gene designation" value="Hnrnpa0"/>
</dbReference>
<dbReference type="VEuPathDB" id="HostDB:ENSMUSG00000007836"/>
<dbReference type="eggNOG" id="KOG0118">
    <property type="taxonomic scope" value="Eukaryota"/>
</dbReference>
<dbReference type="GeneTree" id="ENSGT00940000154808"/>
<dbReference type="HOGENOM" id="CLU_012062_1_4_1"/>
<dbReference type="InParanoid" id="Q9CX86"/>
<dbReference type="OMA" id="RYGSYMG"/>
<dbReference type="OrthoDB" id="1875751at2759"/>
<dbReference type="PhylomeDB" id="Q9CX86"/>
<dbReference type="TreeFam" id="TF351342"/>
<dbReference type="BioGRID-ORCS" id="77134">
    <property type="hits" value="6 hits in 81 CRISPR screens"/>
</dbReference>
<dbReference type="CD-CODE" id="764D0258">
    <property type="entry name" value="Neuronal RNP granule"/>
</dbReference>
<dbReference type="CD-CODE" id="CE726F99">
    <property type="entry name" value="Postsynaptic density"/>
</dbReference>
<dbReference type="ChiTaRS" id="Hnrnpa0">
    <property type="organism name" value="mouse"/>
</dbReference>
<dbReference type="PRO" id="PR:Q9CX86"/>
<dbReference type="Proteomes" id="UP000000589">
    <property type="component" value="Chromosome 13"/>
</dbReference>
<dbReference type="RNAct" id="Q9CX86">
    <property type="molecule type" value="protein"/>
</dbReference>
<dbReference type="Bgee" id="ENSMUSG00000007836">
    <property type="expression patterns" value="Expressed in manus and 232 other cell types or tissues"/>
</dbReference>
<dbReference type="GO" id="GO:0005654">
    <property type="term" value="C:nucleoplasm"/>
    <property type="evidence" value="ECO:0007669"/>
    <property type="project" value="Ensembl"/>
</dbReference>
<dbReference type="GO" id="GO:1990904">
    <property type="term" value="C:ribonucleoprotein complex"/>
    <property type="evidence" value="ECO:0007669"/>
    <property type="project" value="UniProtKB-KW"/>
</dbReference>
<dbReference type="GO" id="GO:0045202">
    <property type="term" value="C:synapse"/>
    <property type="evidence" value="ECO:0000314"/>
    <property type="project" value="SynGO"/>
</dbReference>
<dbReference type="GO" id="GO:0035925">
    <property type="term" value="F:mRNA 3'-UTR AU-rich region binding"/>
    <property type="evidence" value="ECO:0000314"/>
    <property type="project" value="GO_Central"/>
</dbReference>
<dbReference type="GO" id="GO:0019901">
    <property type="term" value="F:protein kinase binding"/>
    <property type="evidence" value="ECO:0007669"/>
    <property type="project" value="Ensembl"/>
</dbReference>
<dbReference type="GO" id="GO:0070935">
    <property type="term" value="P:3'-UTR-mediated mRNA stabilization"/>
    <property type="evidence" value="ECO:0000314"/>
    <property type="project" value="UniProtKB"/>
</dbReference>
<dbReference type="GO" id="GO:0006954">
    <property type="term" value="P:inflammatory response"/>
    <property type="evidence" value="ECO:0000314"/>
    <property type="project" value="UniProtKB"/>
</dbReference>
<dbReference type="GO" id="GO:0032496">
    <property type="term" value="P:response to lipopolysaccharide"/>
    <property type="evidence" value="ECO:0000314"/>
    <property type="project" value="UniProtKB"/>
</dbReference>
<dbReference type="CDD" id="cd12326">
    <property type="entry name" value="RRM1_hnRNPA0"/>
    <property type="match status" value="1"/>
</dbReference>
<dbReference type="FunFam" id="3.30.70.330:FF:000581">
    <property type="entry name" value="Heterogeneous nuclear ribonucleoprotein A0"/>
    <property type="match status" value="1"/>
</dbReference>
<dbReference type="FunFam" id="3.30.70.330:FF:000040">
    <property type="entry name" value="Heterogeneous nuclear ribonucleoprotein A2/B1"/>
    <property type="match status" value="1"/>
</dbReference>
<dbReference type="Gene3D" id="3.30.70.330">
    <property type="match status" value="2"/>
</dbReference>
<dbReference type="InterPro" id="IPR034801">
    <property type="entry name" value="hnRNPA0_RRM1"/>
</dbReference>
<dbReference type="InterPro" id="IPR012677">
    <property type="entry name" value="Nucleotide-bd_a/b_plait_sf"/>
</dbReference>
<dbReference type="InterPro" id="IPR035979">
    <property type="entry name" value="RBD_domain_sf"/>
</dbReference>
<dbReference type="InterPro" id="IPR000504">
    <property type="entry name" value="RRM_dom"/>
</dbReference>
<dbReference type="PANTHER" id="PTHR48026:SF28">
    <property type="entry name" value="HETEROGENEOUS NUCLEAR RIBONUCLEOPROTEIN A0,-LIKE"/>
    <property type="match status" value="1"/>
</dbReference>
<dbReference type="PANTHER" id="PTHR48026">
    <property type="entry name" value="HOMOLOGOUS TO DROSOPHILA SQD (SQUID) PROTEIN"/>
    <property type="match status" value="1"/>
</dbReference>
<dbReference type="Pfam" id="PF00076">
    <property type="entry name" value="RRM_1"/>
    <property type="match status" value="2"/>
</dbReference>
<dbReference type="SMART" id="SM00360">
    <property type="entry name" value="RRM"/>
    <property type="match status" value="2"/>
</dbReference>
<dbReference type="SUPFAM" id="SSF54928">
    <property type="entry name" value="RNA-binding domain, RBD"/>
    <property type="match status" value="2"/>
</dbReference>
<dbReference type="PROSITE" id="PS50102">
    <property type="entry name" value="RRM"/>
    <property type="match status" value="2"/>
</dbReference>
<name>ROA0_MOUSE</name>
<feature type="chain" id="PRO_0000415269" description="Heterogeneous nuclear ribonucleoprotein A0">
    <location>
        <begin position="1"/>
        <end position="305"/>
    </location>
</feature>
<feature type="domain" description="RRM 1" evidence="3">
    <location>
        <begin position="7"/>
        <end position="86"/>
    </location>
</feature>
<feature type="domain" description="RRM 2" evidence="3">
    <location>
        <begin position="98"/>
        <end position="175"/>
    </location>
</feature>
<feature type="region of interest" description="Disordered" evidence="4">
    <location>
        <begin position="178"/>
        <end position="211"/>
    </location>
</feature>
<feature type="region of interest" description="Disordered" evidence="4">
    <location>
        <begin position="265"/>
        <end position="305"/>
    </location>
</feature>
<feature type="compositionally biased region" description="Gly residues" evidence="4">
    <location>
        <begin position="181"/>
        <end position="211"/>
    </location>
</feature>
<feature type="compositionally biased region" description="Gly residues" evidence="4">
    <location>
        <begin position="272"/>
        <end position="284"/>
    </location>
</feature>
<feature type="compositionally biased region" description="Gly residues" evidence="4">
    <location>
        <begin position="292"/>
        <end position="305"/>
    </location>
</feature>
<feature type="modified residue" description="N-acetylmethionine" evidence="2">
    <location>
        <position position="1"/>
    </location>
</feature>
<feature type="modified residue" description="Phosphoserine" evidence="2">
    <location>
        <position position="68"/>
    </location>
</feature>
<feature type="modified residue" description="Phosphoserine; by MAPKAPK2" evidence="5">
    <location>
        <position position="84"/>
    </location>
</feature>
<feature type="modified residue" description="N6-acetyllysine" evidence="6">
    <location>
        <position position="133"/>
    </location>
</feature>
<feature type="modified residue" description="Omega-N-methylarginine" evidence="7">
    <location>
        <position position="139"/>
    </location>
</feature>
<feature type="modified residue" description="Omega-N-methylarginine" evidence="7">
    <location>
        <position position="286"/>
    </location>
</feature>
<feature type="modified residue" description="Asymmetric dimethylarginine; alternate" evidence="7">
    <location>
        <position position="293"/>
    </location>
</feature>
<feature type="modified residue" description="Dimethylated arginine; alternate" evidence="2">
    <location>
        <position position="293"/>
    </location>
</feature>
<feature type="modified residue" description="Omega-N-methylarginine; alternate" evidence="7">
    <location>
        <position position="293"/>
    </location>
</feature>
<feature type="cross-link" description="Glycyl lysine isopeptide (Lys-Gly) (interchain with G-Cter in SUMO2)" evidence="2">
    <location>
        <position position="80"/>
    </location>
</feature>
<feature type="cross-link" description="Glycyl lysine isopeptide (Lys-Gly) (interchain with G-Cter in SUMO2)" evidence="2">
    <location>
        <position position="96"/>
    </location>
</feature>
<feature type="cross-link" description="Glycyl lysine isopeptide (Lys-Gly) (interchain with G-Cter in SUMO2)" evidence="2">
    <location>
        <position position="98"/>
    </location>
</feature>
<feature type="cross-link" description="Glycyl lysine isopeptide (Lys-Gly) (interchain with G-Cter in SUMO2)" evidence="2">
    <location>
        <position position="99"/>
    </location>
</feature>
<feature type="cross-link" description="Glycyl lysine isopeptide (Lys-Gly) (interchain with G-Cter in SUMO2)" evidence="2">
    <location>
        <position position="106"/>
    </location>
</feature>
<feature type="cross-link" description="Glycyl lysine isopeptide (Lys-Gly) (interchain with G-Cter in SUMO2)" evidence="2">
    <location>
        <position position="154"/>
    </location>
</feature>
<feature type="cross-link" description="Glycyl lysine isopeptide (Lys-Gly) (interchain with G-Cter in SUMO2)" evidence="2">
    <location>
        <position position="159"/>
    </location>
</feature>
<feature type="cross-link" description="Glycyl lysine isopeptide (Lys-Gly) (interchain with G-Cter in SUMO2)" evidence="2">
    <location>
        <position position="172"/>
    </location>
</feature>
<feature type="cross-link" description="Glycyl lysine isopeptide (Lys-Gly) (interchain with G-Cter in SUMO2)" evidence="2">
    <location>
        <position position="176"/>
    </location>
</feature>
<evidence type="ECO:0000250" key="1"/>
<evidence type="ECO:0000250" key="2">
    <source>
        <dbReference type="UniProtKB" id="Q13151"/>
    </source>
</evidence>
<evidence type="ECO:0000255" key="3">
    <source>
        <dbReference type="PROSITE-ProRule" id="PRU00176"/>
    </source>
</evidence>
<evidence type="ECO:0000256" key="4">
    <source>
        <dbReference type="SAM" id="MobiDB-lite"/>
    </source>
</evidence>
<evidence type="ECO:0000269" key="5">
    <source>
    </source>
</evidence>
<evidence type="ECO:0007744" key="6">
    <source>
    </source>
</evidence>
<evidence type="ECO:0007744" key="7">
    <source>
    </source>
</evidence>
<proteinExistence type="evidence at protein level"/>
<protein>
    <recommendedName>
        <fullName>Heterogeneous nuclear ribonucleoprotein A0</fullName>
        <shortName>hnRNP A0</shortName>
    </recommendedName>
</protein>
<comment type="function">
    <text evidence="5">mRNA-binding component of ribonucleosomes. Specifically binds AU-rich element (ARE)-containing mRNAs. Involved in post-transcriptional regulation of cytokines mRNAs.</text>
</comment>
<comment type="subcellular location">
    <subcellularLocation>
        <location evidence="1">Nucleus</location>
    </subcellularLocation>
    <text evidence="1">Component of ribonucleosomes.</text>
</comment>
<comment type="PTM">
    <text evidence="5">Phosphorylated at Ser-84 by MAPKAPK2 in response to LPS treatment, promoting stabilization of GADD45A mRNA.</text>
</comment>
<comment type="PTM">
    <text evidence="1">Arg-293 is dimethylated, probably to asymmetric dimethylarginine.</text>
</comment>
<reference key="1">
    <citation type="journal article" date="2005" name="Science">
        <title>The transcriptional landscape of the mammalian genome.</title>
        <authorList>
            <person name="Carninci P."/>
            <person name="Kasukawa T."/>
            <person name="Katayama S."/>
            <person name="Gough J."/>
            <person name="Frith M.C."/>
            <person name="Maeda N."/>
            <person name="Oyama R."/>
            <person name="Ravasi T."/>
            <person name="Lenhard B."/>
            <person name="Wells C."/>
            <person name="Kodzius R."/>
            <person name="Shimokawa K."/>
            <person name="Bajic V.B."/>
            <person name="Brenner S.E."/>
            <person name="Batalov S."/>
            <person name="Forrest A.R."/>
            <person name="Zavolan M."/>
            <person name="Davis M.J."/>
            <person name="Wilming L.G."/>
            <person name="Aidinis V."/>
            <person name="Allen J.E."/>
            <person name="Ambesi-Impiombato A."/>
            <person name="Apweiler R."/>
            <person name="Aturaliya R.N."/>
            <person name="Bailey T.L."/>
            <person name="Bansal M."/>
            <person name="Baxter L."/>
            <person name="Beisel K.W."/>
            <person name="Bersano T."/>
            <person name="Bono H."/>
            <person name="Chalk A.M."/>
            <person name="Chiu K.P."/>
            <person name="Choudhary V."/>
            <person name="Christoffels A."/>
            <person name="Clutterbuck D.R."/>
            <person name="Crowe M.L."/>
            <person name="Dalla E."/>
            <person name="Dalrymple B.P."/>
            <person name="de Bono B."/>
            <person name="Della Gatta G."/>
            <person name="di Bernardo D."/>
            <person name="Down T."/>
            <person name="Engstrom P."/>
            <person name="Fagiolini M."/>
            <person name="Faulkner G."/>
            <person name="Fletcher C.F."/>
            <person name="Fukushima T."/>
            <person name="Furuno M."/>
            <person name="Futaki S."/>
            <person name="Gariboldi M."/>
            <person name="Georgii-Hemming P."/>
            <person name="Gingeras T.R."/>
            <person name="Gojobori T."/>
            <person name="Green R.E."/>
            <person name="Gustincich S."/>
            <person name="Harbers M."/>
            <person name="Hayashi Y."/>
            <person name="Hensch T.K."/>
            <person name="Hirokawa N."/>
            <person name="Hill D."/>
            <person name="Huminiecki L."/>
            <person name="Iacono M."/>
            <person name="Ikeo K."/>
            <person name="Iwama A."/>
            <person name="Ishikawa T."/>
            <person name="Jakt M."/>
            <person name="Kanapin A."/>
            <person name="Katoh M."/>
            <person name="Kawasawa Y."/>
            <person name="Kelso J."/>
            <person name="Kitamura H."/>
            <person name="Kitano H."/>
            <person name="Kollias G."/>
            <person name="Krishnan S.P."/>
            <person name="Kruger A."/>
            <person name="Kummerfeld S.K."/>
            <person name="Kurochkin I.V."/>
            <person name="Lareau L.F."/>
            <person name="Lazarevic D."/>
            <person name="Lipovich L."/>
            <person name="Liu J."/>
            <person name="Liuni S."/>
            <person name="McWilliam S."/>
            <person name="Madan Babu M."/>
            <person name="Madera M."/>
            <person name="Marchionni L."/>
            <person name="Matsuda H."/>
            <person name="Matsuzawa S."/>
            <person name="Miki H."/>
            <person name="Mignone F."/>
            <person name="Miyake S."/>
            <person name="Morris K."/>
            <person name="Mottagui-Tabar S."/>
            <person name="Mulder N."/>
            <person name="Nakano N."/>
            <person name="Nakauchi H."/>
            <person name="Ng P."/>
            <person name="Nilsson R."/>
            <person name="Nishiguchi S."/>
            <person name="Nishikawa S."/>
            <person name="Nori F."/>
            <person name="Ohara O."/>
            <person name="Okazaki Y."/>
            <person name="Orlando V."/>
            <person name="Pang K.C."/>
            <person name="Pavan W.J."/>
            <person name="Pavesi G."/>
            <person name="Pesole G."/>
            <person name="Petrovsky N."/>
            <person name="Piazza S."/>
            <person name="Reed J."/>
            <person name="Reid J.F."/>
            <person name="Ring B.Z."/>
            <person name="Ringwald M."/>
            <person name="Rost B."/>
            <person name="Ruan Y."/>
            <person name="Salzberg S.L."/>
            <person name="Sandelin A."/>
            <person name="Schneider C."/>
            <person name="Schoenbach C."/>
            <person name="Sekiguchi K."/>
            <person name="Semple C.A."/>
            <person name="Seno S."/>
            <person name="Sessa L."/>
            <person name="Sheng Y."/>
            <person name="Shibata Y."/>
            <person name="Shimada H."/>
            <person name="Shimada K."/>
            <person name="Silva D."/>
            <person name="Sinclair B."/>
            <person name="Sperling S."/>
            <person name="Stupka E."/>
            <person name="Sugiura K."/>
            <person name="Sultana R."/>
            <person name="Takenaka Y."/>
            <person name="Taki K."/>
            <person name="Tammoja K."/>
            <person name="Tan S.L."/>
            <person name="Tang S."/>
            <person name="Taylor M.S."/>
            <person name="Tegner J."/>
            <person name="Teichmann S.A."/>
            <person name="Ueda H.R."/>
            <person name="van Nimwegen E."/>
            <person name="Verardo R."/>
            <person name="Wei C.L."/>
            <person name="Yagi K."/>
            <person name="Yamanishi H."/>
            <person name="Zabarovsky E."/>
            <person name="Zhu S."/>
            <person name="Zimmer A."/>
            <person name="Hide W."/>
            <person name="Bult C."/>
            <person name="Grimmond S.M."/>
            <person name="Teasdale R.D."/>
            <person name="Liu E.T."/>
            <person name="Brusic V."/>
            <person name="Quackenbush J."/>
            <person name="Wahlestedt C."/>
            <person name="Mattick J.S."/>
            <person name="Hume D.A."/>
            <person name="Kai C."/>
            <person name="Sasaki D."/>
            <person name="Tomaru Y."/>
            <person name="Fukuda S."/>
            <person name="Kanamori-Katayama M."/>
            <person name="Suzuki M."/>
            <person name="Aoki J."/>
            <person name="Arakawa T."/>
            <person name="Iida J."/>
            <person name="Imamura K."/>
            <person name="Itoh M."/>
            <person name="Kato T."/>
            <person name="Kawaji H."/>
            <person name="Kawagashira N."/>
            <person name="Kawashima T."/>
            <person name="Kojima M."/>
            <person name="Kondo S."/>
            <person name="Konno H."/>
            <person name="Nakano K."/>
            <person name="Ninomiya N."/>
            <person name="Nishio T."/>
            <person name="Okada M."/>
            <person name="Plessy C."/>
            <person name="Shibata K."/>
            <person name="Shiraki T."/>
            <person name="Suzuki S."/>
            <person name="Tagami M."/>
            <person name="Waki K."/>
            <person name="Watahiki A."/>
            <person name="Okamura-Oho Y."/>
            <person name="Suzuki H."/>
            <person name="Kawai J."/>
            <person name="Hayashizaki Y."/>
        </authorList>
    </citation>
    <scope>NUCLEOTIDE SEQUENCE [LARGE SCALE MRNA]</scope>
    <source>
        <strain>C57BL/6J</strain>
        <tissue>Head</tissue>
    </source>
</reference>
<reference key="2">
    <citation type="journal article" date="2009" name="PLoS Biol.">
        <title>Lineage-specific biology revealed by a finished genome assembly of the mouse.</title>
        <authorList>
            <person name="Church D.M."/>
            <person name="Goodstadt L."/>
            <person name="Hillier L.W."/>
            <person name="Zody M.C."/>
            <person name="Goldstein S."/>
            <person name="She X."/>
            <person name="Bult C.J."/>
            <person name="Agarwala R."/>
            <person name="Cherry J.L."/>
            <person name="DiCuccio M."/>
            <person name="Hlavina W."/>
            <person name="Kapustin Y."/>
            <person name="Meric P."/>
            <person name="Maglott D."/>
            <person name="Birtle Z."/>
            <person name="Marques A.C."/>
            <person name="Graves T."/>
            <person name="Zhou S."/>
            <person name="Teague B."/>
            <person name="Potamousis K."/>
            <person name="Churas C."/>
            <person name="Place M."/>
            <person name="Herschleb J."/>
            <person name="Runnheim R."/>
            <person name="Forrest D."/>
            <person name="Amos-Landgraf J."/>
            <person name="Schwartz D.C."/>
            <person name="Cheng Z."/>
            <person name="Lindblad-Toh K."/>
            <person name="Eichler E.E."/>
            <person name="Ponting C.P."/>
        </authorList>
    </citation>
    <scope>NUCLEOTIDE SEQUENCE [LARGE SCALE GENOMIC DNA]</scope>
    <source>
        <strain>C57BL/6J</strain>
    </source>
</reference>
<reference key="3">
    <citation type="journal article" date="2002" name="EMBO J.">
        <title>Inhibition of SAPK2a/p38 prevents hnRNP A0 phosphorylation by MAPKAP-K2 and its interaction with cytokine mRNAs.</title>
        <authorList>
            <person name="Rousseau S."/>
            <person name="Morrice N."/>
            <person name="Peggie M."/>
            <person name="Campbell D.G."/>
            <person name="Gaestel M."/>
            <person name="Cohen P."/>
        </authorList>
    </citation>
    <scope>FUNCTION</scope>
    <scope>RNA-BINDING</scope>
    <scope>PHOSPHORYLATION AT SER-84 BY MAPKAPK2</scope>
</reference>
<reference key="4">
    <citation type="journal article" date="2010" name="Cell">
        <title>A tissue-specific atlas of mouse protein phosphorylation and expression.</title>
        <authorList>
            <person name="Huttlin E.L."/>
            <person name="Jedrychowski M.P."/>
            <person name="Elias J.E."/>
            <person name="Goswami T."/>
            <person name="Rad R."/>
            <person name="Beausoleil S.A."/>
            <person name="Villen J."/>
            <person name="Haas W."/>
            <person name="Sowa M.E."/>
            <person name="Gygi S.P."/>
        </authorList>
    </citation>
    <scope>IDENTIFICATION BY MASS SPECTROMETRY [LARGE SCALE ANALYSIS]</scope>
    <source>
        <tissue>Brain</tissue>
        <tissue>Brown adipose tissue</tissue>
        <tissue>Heart</tissue>
        <tissue>Kidney</tissue>
        <tissue>Liver</tissue>
        <tissue>Lung</tissue>
        <tissue>Pancreas</tissue>
        <tissue>Spleen</tissue>
        <tissue>Testis</tissue>
    </source>
</reference>
<reference key="5">
    <citation type="journal article" date="2013" name="Mol. Cell">
        <title>SIRT5-mediated lysine desuccinylation impacts diverse metabolic pathways.</title>
        <authorList>
            <person name="Park J."/>
            <person name="Chen Y."/>
            <person name="Tishkoff D.X."/>
            <person name="Peng C."/>
            <person name="Tan M."/>
            <person name="Dai L."/>
            <person name="Xie Z."/>
            <person name="Zhang Y."/>
            <person name="Zwaans B.M."/>
            <person name="Skinner M.E."/>
            <person name="Lombard D.B."/>
            <person name="Zhao Y."/>
        </authorList>
    </citation>
    <scope>ACETYLATION [LARGE SCALE ANALYSIS] AT LYS-133</scope>
    <scope>IDENTIFICATION BY MASS SPECTROMETRY [LARGE SCALE ANALYSIS]</scope>
    <source>
        <tissue>Embryonic fibroblast</tissue>
    </source>
</reference>
<reference key="6">
    <citation type="journal article" date="2014" name="Mol. Cell. Proteomics">
        <title>Immunoaffinity enrichment and mass spectrometry analysis of protein methylation.</title>
        <authorList>
            <person name="Guo A."/>
            <person name="Gu H."/>
            <person name="Zhou J."/>
            <person name="Mulhern D."/>
            <person name="Wang Y."/>
            <person name="Lee K.A."/>
            <person name="Yang V."/>
            <person name="Aguiar M."/>
            <person name="Kornhauser J."/>
            <person name="Jia X."/>
            <person name="Ren J."/>
            <person name="Beausoleil S.A."/>
            <person name="Silva J.C."/>
            <person name="Vemulapalli V."/>
            <person name="Bedford M.T."/>
            <person name="Comb M.J."/>
        </authorList>
    </citation>
    <scope>METHYLATION [LARGE SCALE ANALYSIS] AT ARG-139; ARG-286 AND ARG-293</scope>
    <scope>IDENTIFICATION BY MASS SPECTROMETRY [LARGE SCALE ANALYSIS]</scope>
    <source>
        <tissue>Brain</tissue>
        <tissue>Embryo</tissue>
    </source>
</reference>
<accession>Q9CX86</accession>
<keyword id="KW-0007">Acetylation</keyword>
<keyword id="KW-1017">Isopeptide bond</keyword>
<keyword id="KW-0488">Methylation</keyword>
<keyword id="KW-0539">Nucleus</keyword>
<keyword id="KW-0597">Phosphoprotein</keyword>
<keyword id="KW-1185">Reference proteome</keyword>
<keyword id="KW-0677">Repeat</keyword>
<keyword id="KW-0687">Ribonucleoprotein</keyword>
<keyword id="KW-0694">RNA-binding</keyword>
<keyword id="KW-0832">Ubl conjugation</keyword>